<dbReference type="EMBL" id="CP000416">
    <property type="protein sequence ID" value="ABJ64078.1"/>
    <property type="molecule type" value="Genomic_DNA"/>
</dbReference>
<dbReference type="RefSeq" id="WP_011667668.1">
    <property type="nucleotide sequence ID" value="NC_008497.1"/>
</dbReference>
<dbReference type="SMR" id="Q03RU4"/>
<dbReference type="STRING" id="387344.LVIS_0943"/>
<dbReference type="DNASU" id="4413832"/>
<dbReference type="GeneID" id="56992837"/>
<dbReference type="KEGG" id="lbr:LVIS_0943"/>
<dbReference type="eggNOG" id="COG0228">
    <property type="taxonomic scope" value="Bacteria"/>
</dbReference>
<dbReference type="HOGENOM" id="CLU_100590_5_0_9"/>
<dbReference type="Proteomes" id="UP000001652">
    <property type="component" value="Chromosome"/>
</dbReference>
<dbReference type="GO" id="GO:0005737">
    <property type="term" value="C:cytoplasm"/>
    <property type="evidence" value="ECO:0007669"/>
    <property type="project" value="UniProtKB-ARBA"/>
</dbReference>
<dbReference type="GO" id="GO:0015935">
    <property type="term" value="C:small ribosomal subunit"/>
    <property type="evidence" value="ECO:0007669"/>
    <property type="project" value="TreeGrafter"/>
</dbReference>
<dbReference type="GO" id="GO:0003735">
    <property type="term" value="F:structural constituent of ribosome"/>
    <property type="evidence" value="ECO:0007669"/>
    <property type="project" value="InterPro"/>
</dbReference>
<dbReference type="GO" id="GO:0006412">
    <property type="term" value="P:translation"/>
    <property type="evidence" value="ECO:0007669"/>
    <property type="project" value="UniProtKB-UniRule"/>
</dbReference>
<dbReference type="FunFam" id="3.30.1320.10:FF:000002">
    <property type="entry name" value="30S ribosomal protein S16"/>
    <property type="match status" value="1"/>
</dbReference>
<dbReference type="Gene3D" id="3.30.1320.10">
    <property type="match status" value="1"/>
</dbReference>
<dbReference type="HAMAP" id="MF_00385">
    <property type="entry name" value="Ribosomal_bS16"/>
    <property type="match status" value="1"/>
</dbReference>
<dbReference type="InterPro" id="IPR000307">
    <property type="entry name" value="Ribosomal_bS16"/>
</dbReference>
<dbReference type="InterPro" id="IPR023803">
    <property type="entry name" value="Ribosomal_bS16_dom_sf"/>
</dbReference>
<dbReference type="NCBIfam" id="TIGR00002">
    <property type="entry name" value="S16"/>
    <property type="match status" value="1"/>
</dbReference>
<dbReference type="PANTHER" id="PTHR12919">
    <property type="entry name" value="30S RIBOSOMAL PROTEIN S16"/>
    <property type="match status" value="1"/>
</dbReference>
<dbReference type="PANTHER" id="PTHR12919:SF20">
    <property type="entry name" value="SMALL RIBOSOMAL SUBUNIT PROTEIN BS16M"/>
    <property type="match status" value="1"/>
</dbReference>
<dbReference type="Pfam" id="PF00886">
    <property type="entry name" value="Ribosomal_S16"/>
    <property type="match status" value="1"/>
</dbReference>
<dbReference type="SUPFAM" id="SSF54565">
    <property type="entry name" value="Ribosomal protein S16"/>
    <property type="match status" value="1"/>
</dbReference>
<protein>
    <recommendedName>
        <fullName evidence="1">Small ribosomal subunit protein bS16</fullName>
    </recommendedName>
    <alternativeName>
        <fullName evidence="2">30S ribosomal protein S16</fullName>
    </alternativeName>
</protein>
<comment type="similarity">
    <text evidence="1">Belongs to the bacterial ribosomal protein bS16 family.</text>
</comment>
<organism>
    <name type="scientific">Levilactobacillus brevis (strain ATCC 367 / BCRC 12310 / CIP 105137 / JCM 1170 / LMG 11437 / NCIMB 947 / NCTC 947)</name>
    <name type="common">Lactobacillus brevis</name>
    <dbReference type="NCBI Taxonomy" id="387344"/>
    <lineage>
        <taxon>Bacteria</taxon>
        <taxon>Bacillati</taxon>
        <taxon>Bacillota</taxon>
        <taxon>Bacilli</taxon>
        <taxon>Lactobacillales</taxon>
        <taxon>Lactobacillaceae</taxon>
        <taxon>Levilactobacillus</taxon>
    </lineage>
</organism>
<name>RS16_LEVBA</name>
<proteinExistence type="inferred from homology"/>
<gene>
    <name evidence="1" type="primary">rpsP</name>
    <name type="ordered locus">LVIS_0943</name>
</gene>
<reference key="1">
    <citation type="journal article" date="2006" name="Proc. Natl. Acad. Sci. U.S.A.">
        <title>Comparative genomics of the lactic acid bacteria.</title>
        <authorList>
            <person name="Makarova K.S."/>
            <person name="Slesarev A."/>
            <person name="Wolf Y.I."/>
            <person name="Sorokin A."/>
            <person name="Mirkin B."/>
            <person name="Koonin E.V."/>
            <person name="Pavlov A."/>
            <person name="Pavlova N."/>
            <person name="Karamychev V."/>
            <person name="Polouchine N."/>
            <person name="Shakhova V."/>
            <person name="Grigoriev I."/>
            <person name="Lou Y."/>
            <person name="Rohksar D."/>
            <person name="Lucas S."/>
            <person name="Huang K."/>
            <person name="Goodstein D.M."/>
            <person name="Hawkins T."/>
            <person name="Plengvidhya V."/>
            <person name="Welker D."/>
            <person name="Hughes J."/>
            <person name="Goh Y."/>
            <person name="Benson A."/>
            <person name="Baldwin K."/>
            <person name="Lee J.-H."/>
            <person name="Diaz-Muniz I."/>
            <person name="Dosti B."/>
            <person name="Smeianov V."/>
            <person name="Wechter W."/>
            <person name="Barabote R."/>
            <person name="Lorca G."/>
            <person name="Altermann E."/>
            <person name="Barrangou R."/>
            <person name="Ganesan B."/>
            <person name="Xie Y."/>
            <person name="Rawsthorne H."/>
            <person name="Tamir D."/>
            <person name="Parker C."/>
            <person name="Breidt F."/>
            <person name="Broadbent J.R."/>
            <person name="Hutkins R."/>
            <person name="O'Sullivan D."/>
            <person name="Steele J."/>
            <person name="Unlu G."/>
            <person name="Saier M.H. Jr."/>
            <person name="Klaenhammer T."/>
            <person name="Richardson P."/>
            <person name="Kozyavkin S."/>
            <person name="Weimer B.C."/>
            <person name="Mills D.A."/>
        </authorList>
    </citation>
    <scope>NUCLEOTIDE SEQUENCE [LARGE SCALE GENOMIC DNA]</scope>
    <source>
        <strain>ATCC 367 / BCRC 12310 / CIP 105137 / JCM 1170 / LMG 11437 / NCIMB 947 / NCTC 947</strain>
    </source>
</reference>
<sequence length="91" mass="10398">MSVKIRLKRMGSKKRPFYRVVVADSRSPRDGRFIEQVGTYNPVTEPAQVTLKEESILNWLNNGAQPSDTVKTLLSNAGIMKQYHEAKYTKK</sequence>
<keyword id="KW-1185">Reference proteome</keyword>
<keyword id="KW-0687">Ribonucleoprotein</keyword>
<keyword id="KW-0689">Ribosomal protein</keyword>
<evidence type="ECO:0000255" key="1">
    <source>
        <dbReference type="HAMAP-Rule" id="MF_00385"/>
    </source>
</evidence>
<evidence type="ECO:0000305" key="2"/>
<feature type="chain" id="PRO_1000049272" description="Small ribosomal subunit protein bS16">
    <location>
        <begin position="1"/>
        <end position="91"/>
    </location>
</feature>
<accession>Q03RU4</accession>